<dbReference type="EMBL" id="AL009126">
    <property type="protein sequence ID" value="CAB12967.1"/>
    <property type="molecule type" value="Genomic_DNA"/>
</dbReference>
<dbReference type="PIR" id="F69854">
    <property type="entry name" value="F69854"/>
</dbReference>
<dbReference type="RefSeq" id="NP_389008.1">
    <property type="nucleotide sequence ID" value="NC_000964.3"/>
</dbReference>
<dbReference type="RefSeq" id="WP_003245356.1">
    <property type="nucleotide sequence ID" value="NZ_OZ025638.1"/>
</dbReference>
<dbReference type="FunCoup" id="O34585">
    <property type="interactions" value="4"/>
</dbReference>
<dbReference type="STRING" id="224308.BSU11260"/>
<dbReference type="PaxDb" id="224308-BSU11260"/>
<dbReference type="EnsemblBacteria" id="CAB12967">
    <property type="protein sequence ID" value="CAB12967"/>
    <property type="gene ID" value="BSU_11260"/>
</dbReference>
<dbReference type="GeneID" id="936385"/>
<dbReference type="KEGG" id="bsu:BSU11260"/>
<dbReference type="PATRIC" id="fig|224308.179.peg.1211"/>
<dbReference type="eggNOG" id="ENOG50339XF">
    <property type="taxonomic scope" value="Bacteria"/>
</dbReference>
<dbReference type="InParanoid" id="O34585"/>
<dbReference type="OrthoDB" id="5244304at2"/>
<dbReference type="BioCyc" id="BSUB:BSU11260-MONOMER"/>
<dbReference type="Proteomes" id="UP000001570">
    <property type="component" value="Chromosome"/>
</dbReference>
<dbReference type="InterPro" id="IPR025549">
    <property type="entry name" value="YjzC"/>
</dbReference>
<dbReference type="Pfam" id="PF14168">
    <property type="entry name" value="YjzC"/>
    <property type="match status" value="1"/>
</dbReference>
<organism>
    <name type="scientific">Bacillus subtilis (strain 168)</name>
    <dbReference type="NCBI Taxonomy" id="224308"/>
    <lineage>
        <taxon>Bacteria</taxon>
        <taxon>Bacillati</taxon>
        <taxon>Bacillota</taxon>
        <taxon>Bacilli</taxon>
        <taxon>Bacillales</taxon>
        <taxon>Bacillaceae</taxon>
        <taxon>Bacillus</taxon>
    </lineage>
</organism>
<proteinExistence type="predicted"/>
<accession>O34585</accession>
<reference key="1">
    <citation type="journal article" date="1997" name="Nature">
        <title>The complete genome sequence of the Gram-positive bacterium Bacillus subtilis.</title>
        <authorList>
            <person name="Kunst F."/>
            <person name="Ogasawara N."/>
            <person name="Moszer I."/>
            <person name="Albertini A.M."/>
            <person name="Alloni G."/>
            <person name="Azevedo V."/>
            <person name="Bertero M.G."/>
            <person name="Bessieres P."/>
            <person name="Bolotin A."/>
            <person name="Borchert S."/>
            <person name="Borriss R."/>
            <person name="Boursier L."/>
            <person name="Brans A."/>
            <person name="Braun M."/>
            <person name="Brignell S.C."/>
            <person name="Bron S."/>
            <person name="Brouillet S."/>
            <person name="Bruschi C.V."/>
            <person name="Caldwell B."/>
            <person name="Capuano V."/>
            <person name="Carter N.M."/>
            <person name="Choi S.-K."/>
            <person name="Codani J.-J."/>
            <person name="Connerton I.F."/>
            <person name="Cummings N.J."/>
            <person name="Daniel R.A."/>
            <person name="Denizot F."/>
            <person name="Devine K.M."/>
            <person name="Duesterhoeft A."/>
            <person name="Ehrlich S.D."/>
            <person name="Emmerson P.T."/>
            <person name="Entian K.-D."/>
            <person name="Errington J."/>
            <person name="Fabret C."/>
            <person name="Ferrari E."/>
            <person name="Foulger D."/>
            <person name="Fritz C."/>
            <person name="Fujita M."/>
            <person name="Fujita Y."/>
            <person name="Fuma S."/>
            <person name="Galizzi A."/>
            <person name="Galleron N."/>
            <person name="Ghim S.-Y."/>
            <person name="Glaser P."/>
            <person name="Goffeau A."/>
            <person name="Golightly E.J."/>
            <person name="Grandi G."/>
            <person name="Guiseppi G."/>
            <person name="Guy B.J."/>
            <person name="Haga K."/>
            <person name="Haiech J."/>
            <person name="Harwood C.R."/>
            <person name="Henaut A."/>
            <person name="Hilbert H."/>
            <person name="Holsappel S."/>
            <person name="Hosono S."/>
            <person name="Hullo M.-F."/>
            <person name="Itaya M."/>
            <person name="Jones L.-M."/>
            <person name="Joris B."/>
            <person name="Karamata D."/>
            <person name="Kasahara Y."/>
            <person name="Klaerr-Blanchard M."/>
            <person name="Klein C."/>
            <person name="Kobayashi Y."/>
            <person name="Koetter P."/>
            <person name="Koningstein G."/>
            <person name="Krogh S."/>
            <person name="Kumano M."/>
            <person name="Kurita K."/>
            <person name="Lapidus A."/>
            <person name="Lardinois S."/>
            <person name="Lauber J."/>
            <person name="Lazarevic V."/>
            <person name="Lee S.-M."/>
            <person name="Levine A."/>
            <person name="Liu H."/>
            <person name="Masuda S."/>
            <person name="Mauel C."/>
            <person name="Medigue C."/>
            <person name="Medina N."/>
            <person name="Mellado R.P."/>
            <person name="Mizuno M."/>
            <person name="Moestl D."/>
            <person name="Nakai S."/>
            <person name="Noback M."/>
            <person name="Noone D."/>
            <person name="O'Reilly M."/>
            <person name="Ogawa K."/>
            <person name="Ogiwara A."/>
            <person name="Oudega B."/>
            <person name="Park S.-H."/>
            <person name="Parro V."/>
            <person name="Pohl T.M."/>
            <person name="Portetelle D."/>
            <person name="Porwollik S."/>
            <person name="Prescott A.M."/>
            <person name="Presecan E."/>
            <person name="Pujic P."/>
            <person name="Purnelle B."/>
            <person name="Rapoport G."/>
            <person name="Rey M."/>
            <person name="Reynolds S."/>
            <person name="Rieger M."/>
            <person name="Rivolta C."/>
            <person name="Rocha E."/>
            <person name="Roche B."/>
            <person name="Rose M."/>
            <person name="Sadaie Y."/>
            <person name="Sato T."/>
            <person name="Scanlan E."/>
            <person name="Schleich S."/>
            <person name="Schroeter R."/>
            <person name="Scoffone F."/>
            <person name="Sekiguchi J."/>
            <person name="Sekowska A."/>
            <person name="Seror S.J."/>
            <person name="Serror P."/>
            <person name="Shin B.-S."/>
            <person name="Soldo B."/>
            <person name="Sorokin A."/>
            <person name="Tacconi E."/>
            <person name="Takagi T."/>
            <person name="Takahashi H."/>
            <person name="Takemaru K."/>
            <person name="Takeuchi M."/>
            <person name="Tamakoshi A."/>
            <person name="Tanaka T."/>
            <person name="Terpstra P."/>
            <person name="Tognoni A."/>
            <person name="Tosato V."/>
            <person name="Uchiyama S."/>
            <person name="Vandenbol M."/>
            <person name="Vannier F."/>
            <person name="Vassarotti A."/>
            <person name="Viari A."/>
            <person name="Wambutt R."/>
            <person name="Wedler E."/>
            <person name="Wedler H."/>
            <person name="Weitzenegger T."/>
            <person name="Winters P."/>
            <person name="Wipat A."/>
            <person name="Yamamoto H."/>
            <person name="Yamane K."/>
            <person name="Yasumoto K."/>
            <person name="Yata K."/>
            <person name="Yoshida K."/>
            <person name="Yoshikawa H.-F."/>
            <person name="Zumstein E."/>
            <person name="Yoshikawa H."/>
            <person name="Danchin A."/>
        </authorList>
    </citation>
    <scope>NUCLEOTIDE SEQUENCE [LARGE SCALE GENOMIC DNA]</scope>
    <source>
        <strain>168</strain>
    </source>
</reference>
<sequence length="59" mass="6738">MGQQHQFRPGQKAPNNGVYVEIGETGSMVKNPQKVHLSAGEMFPETSNHNRLWTYKRKP</sequence>
<keyword id="KW-1185">Reference proteome</keyword>
<feature type="chain" id="PRO_0000372590" description="Uncharacterized protein YjzC">
    <location>
        <begin position="1"/>
        <end position="59"/>
    </location>
</feature>
<protein>
    <recommendedName>
        <fullName>Uncharacterized protein YjzC</fullName>
    </recommendedName>
</protein>
<name>YJZC_BACSU</name>
<gene>
    <name type="primary">yjzC</name>
    <name type="ordered locus">BSU11260</name>
</gene>